<name>KDSA_YERP3</name>
<feature type="chain" id="PRO_1000057399" description="2-dehydro-3-deoxyphosphooctonate aldolase">
    <location>
        <begin position="1"/>
        <end position="284"/>
    </location>
</feature>
<dbReference type="EC" id="2.5.1.55" evidence="1"/>
<dbReference type="EMBL" id="CP000720">
    <property type="protein sequence ID" value="ABS49129.1"/>
    <property type="molecule type" value="Genomic_DNA"/>
</dbReference>
<dbReference type="RefSeq" id="WP_002211232.1">
    <property type="nucleotide sequence ID" value="NC_009708.1"/>
</dbReference>
<dbReference type="SMR" id="A7FIF7"/>
<dbReference type="GeneID" id="96665504"/>
<dbReference type="KEGG" id="ypi:YpsIP31758_2062"/>
<dbReference type="HOGENOM" id="CLU_036666_0_0_6"/>
<dbReference type="UniPathway" id="UPA00030"/>
<dbReference type="UniPathway" id="UPA00357">
    <property type="reaction ID" value="UER00474"/>
</dbReference>
<dbReference type="Proteomes" id="UP000002412">
    <property type="component" value="Chromosome"/>
</dbReference>
<dbReference type="GO" id="GO:0005737">
    <property type="term" value="C:cytoplasm"/>
    <property type="evidence" value="ECO:0007669"/>
    <property type="project" value="UniProtKB-SubCell"/>
</dbReference>
<dbReference type="GO" id="GO:0008676">
    <property type="term" value="F:3-deoxy-8-phosphooctulonate synthase activity"/>
    <property type="evidence" value="ECO:0007669"/>
    <property type="project" value="UniProtKB-UniRule"/>
</dbReference>
<dbReference type="GO" id="GO:0019294">
    <property type="term" value="P:keto-3-deoxy-D-manno-octulosonic acid biosynthetic process"/>
    <property type="evidence" value="ECO:0007669"/>
    <property type="project" value="UniProtKB-UniRule"/>
</dbReference>
<dbReference type="FunFam" id="3.20.20.70:FF:000058">
    <property type="entry name" value="2-dehydro-3-deoxyphosphooctonate aldolase"/>
    <property type="match status" value="1"/>
</dbReference>
<dbReference type="Gene3D" id="3.20.20.70">
    <property type="entry name" value="Aldolase class I"/>
    <property type="match status" value="1"/>
</dbReference>
<dbReference type="HAMAP" id="MF_00056">
    <property type="entry name" value="KDO8P_synth"/>
    <property type="match status" value="1"/>
</dbReference>
<dbReference type="InterPro" id="IPR013785">
    <property type="entry name" value="Aldolase_TIM"/>
</dbReference>
<dbReference type="InterPro" id="IPR006218">
    <property type="entry name" value="DAHP1/KDSA"/>
</dbReference>
<dbReference type="InterPro" id="IPR006269">
    <property type="entry name" value="KDO8P_synthase"/>
</dbReference>
<dbReference type="NCBIfam" id="TIGR01362">
    <property type="entry name" value="KDO8P_synth"/>
    <property type="match status" value="1"/>
</dbReference>
<dbReference type="NCBIfam" id="NF003543">
    <property type="entry name" value="PRK05198.1"/>
    <property type="match status" value="1"/>
</dbReference>
<dbReference type="NCBIfam" id="NF009109">
    <property type="entry name" value="PRK12457.1"/>
    <property type="match status" value="1"/>
</dbReference>
<dbReference type="PANTHER" id="PTHR21057">
    <property type="entry name" value="PHOSPHO-2-DEHYDRO-3-DEOXYHEPTONATE ALDOLASE"/>
    <property type="match status" value="1"/>
</dbReference>
<dbReference type="Pfam" id="PF00793">
    <property type="entry name" value="DAHP_synth_1"/>
    <property type="match status" value="1"/>
</dbReference>
<dbReference type="SUPFAM" id="SSF51569">
    <property type="entry name" value="Aldolase"/>
    <property type="match status" value="1"/>
</dbReference>
<protein>
    <recommendedName>
        <fullName evidence="1">2-dehydro-3-deoxyphosphooctonate aldolase</fullName>
        <ecNumber evidence="1">2.5.1.55</ecNumber>
    </recommendedName>
    <alternativeName>
        <fullName evidence="1">3-deoxy-D-manno-octulosonic acid 8-phosphate synthase</fullName>
    </alternativeName>
    <alternativeName>
        <fullName evidence="1">KDO-8-phosphate synthase</fullName>
        <shortName evidence="1">KDO 8-P synthase</shortName>
        <shortName evidence="1">KDOPS</shortName>
    </alternativeName>
    <alternativeName>
        <fullName evidence="1">Phospho-2-dehydro-3-deoxyoctonate aldolase</fullName>
    </alternativeName>
</protein>
<proteinExistence type="inferred from homology"/>
<comment type="catalytic activity">
    <reaction evidence="1">
        <text>D-arabinose 5-phosphate + phosphoenolpyruvate + H2O = 3-deoxy-alpha-D-manno-2-octulosonate-8-phosphate + phosphate</text>
        <dbReference type="Rhea" id="RHEA:14053"/>
        <dbReference type="ChEBI" id="CHEBI:15377"/>
        <dbReference type="ChEBI" id="CHEBI:43474"/>
        <dbReference type="ChEBI" id="CHEBI:57693"/>
        <dbReference type="ChEBI" id="CHEBI:58702"/>
        <dbReference type="ChEBI" id="CHEBI:85985"/>
        <dbReference type="EC" id="2.5.1.55"/>
    </reaction>
</comment>
<comment type="pathway">
    <text evidence="1">Carbohydrate biosynthesis; 3-deoxy-D-manno-octulosonate biosynthesis; 3-deoxy-D-manno-octulosonate from D-ribulose 5-phosphate: step 2/3.</text>
</comment>
<comment type="pathway">
    <text evidence="1">Bacterial outer membrane biogenesis; lipopolysaccharide biosynthesis.</text>
</comment>
<comment type="subcellular location">
    <subcellularLocation>
        <location evidence="1">Cytoplasm</location>
    </subcellularLocation>
</comment>
<comment type="similarity">
    <text evidence="1">Belongs to the KdsA family.</text>
</comment>
<organism>
    <name type="scientific">Yersinia pseudotuberculosis serotype O:1b (strain IP 31758)</name>
    <dbReference type="NCBI Taxonomy" id="349747"/>
    <lineage>
        <taxon>Bacteria</taxon>
        <taxon>Pseudomonadati</taxon>
        <taxon>Pseudomonadota</taxon>
        <taxon>Gammaproteobacteria</taxon>
        <taxon>Enterobacterales</taxon>
        <taxon>Yersiniaceae</taxon>
        <taxon>Yersinia</taxon>
    </lineage>
</organism>
<accession>A7FIF7</accession>
<gene>
    <name evidence="1" type="primary">kdsA</name>
    <name type="ordered locus">YpsIP31758_2062</name>
</gene>
<reference key="1">
    <citation type="journal article" date="2007" name="PLoS Genet.">
        <title>The complete genome sequence of Yersinia pseudotuberculosis IP31758, the causative agent of Far East scarlet-like fever.</title>
        <authorList>
            <person name="Eppinger M."/>
            <person name="Rosovitz M.J."/>
            <person name="Fricke W.F."/>
            <person name="Rasko D.A."/>
            <person name="Kokorina G."/>
            <person name="Fayolle C."/>
            <person name="Lindler L.E."/>
            <person name="Carniel E."/>
            <person name="Ravel J."/>
        </authorList>
    </citation>
    <scope>NUCLEOTIDE SEQUENCE [LARGE SCALE GENOMIC DNA]</scope>
    <source>
        <strain>IP 31758</strain>
    </source>
</reference>
<keyword id="KW-0963">Cytoplasm</keyword>
<keyword id="KW-0448">Lipopolysaccharide biosynthesis</keyword>
<keyword id="KW-0808">Transferase</keyword>
<evidence type="ECO:0000255" key="1">
    <source>
        <dbReference type="HAMAP-Rule" id="MF_00056"/>
    </source>
</evidence>
<sequence>MKQKVVSIGDINVANDLPFVLFGGMNVLESRDLAMRICEHYVTVTQKLGIPYVFKASFDKANRSSIHSYRGPGLEEGMKIFQELKQQFGVKVITDVHEASQAQPVSEVVDVIQLPAFLARQTDLVEAMARTGAVINVKKPQFVSPGQMGNIVEKFKEAGNDQVILCDRGSNFGYDNLVVDMLGINVMVQATGGHPVIFDVTHALQCRDPFGAASGGRRAQVAELARAGMAVGLAGLFIEAHPEPNSAKCDGPSALPLDKLEPFLVQMKAIDDLVKSFPALDTSK</sequence>